<proteinExistence type="inferred from homology"/>
<dbReference type="EC" id="4.3.2.10" evidence="1"/>
<dbReference type="EMBL" id="CP000090">
    <property type="protein sequence ID" value="AAZ62465.1"/>
    <property type="molecule type" value="Genomic_DNA"/>
</dbReference>
<dbReference type="SMR" id="Q46WL8"/>
<dbReference type="STRING" id="264198.Reut_A3105"/>
<dbReference type="KEGG" id="reu:Reut_A3105"/>
<dbReference type="eggNOG" id="COG0107">
    <property type="taxonomic scope" value="Bacteria"/>
</dbReference>
<dbReference type="HOGENOM" id="CLU_048577_4_0_4"/>
<dbReference type="OrthoDB" id="9781903at2"/>
<dbReference type="UniPathway" id="UPA00031">
    <property type="reaction ID" value="UER00010"/>
</dbReference>
<dbReference type="GO" id="GO:0005737">
    <property type="term" value="C:cytoplasm"/>
    <property type="evidence" value="ECO:0007669"/>
    <property type="project" value="UniProtKB-SubCell"/>
</dbReference>
<dbReference type="GO" id="GO:0000107">
    <property type="term" value="F:imidazoleglycerol-phosphate synthase activity"/>
    <property type="evidence" value="ECO:0007669"/>
    <property type="project" value="UniProtKB-UniRule"/>
</dbReference>
<dbReference type="GO" id="GO:0016829">
    <property type="term" value="F:lyase activity"/>
    <property type="evidence" value="ECO:0007669"/>
    <property type="project" value="UniProtKB-KW"/>
</dbReference>
<dbReference type="GO" id="GO:0000105">
    <property type="term" value="P:L-histidine biosynthetic process"/>
    <property type="evidence" value="ECO:0007669"/>
    <property type="project" value="UniProtKB-UniRule"/>
</dbReference>
<dbReference type="CDD" id="cd04731">
    <property type="entry name" value="HisF"/>
    <property type="match status" value="1"/>
</dbReference>
<dbReference type="FunFam" id="3.20.20.70:FF:000006">
    <property type="entry name" value="Imidazole glycerol phosphate synthase subunit HisF"/>
    <property type="match status" value="1"/>
</dbReference>
<dbReference type="Gene3D" id="3.20.20.70">
    <property type="entry name" value="Aldolase class I"/>
    <property type="match status" value="1"/>
</dbReference>
<dbReference type="HAMAP" id="MF_01013">
    <property type="entry name" value="HisF"/>
    <property type="match status" value="1"/>
</dbReference>
<dbReference type="InterPro" id="IPR013785">
    <property type="entry name" value="Aldolase_TIM"/>
</dbReference>
<dbReference type="InterPro" id="IPR006062">
    <property type="entry name" value="His_biosynth"/>
</dbReference>
<dbReference type="InterPro" id="IPR004651">
    <property type="entry name" value="HisF"/>
</dbReference>
<dbReference type="InterPro" id="IPR050064">
    <property type="entry name" value="IGPS_HisA/HisF"/>
</dbReference>
<dbReference type="InterPro" id="IPR011060">
    <property type="entry name" value="RibuloseP-bd_barrel"/>
</dbReference>
<dbReference type="NCBIfam" id="TIGR00735">
    <property type="entry name" value="hisF"/>
    <property type="match status" value="1"/>
</dbReference>
<dbReference type="PANTHER" id="PTHR21235:SF2">
    <property type="entry name" value="IMIDAZOLE GLYCEROL PHOSPHATE SYNTHASE HISHF"/>
    <property type="match status" value="1"/>
</dbReference>
<dbReference type="PANTHER" id="PTHR21235">
    <property type="entry name" value="IMIDAZOLE GLYCEROL PHOSPHATE SYNTHASE SUBUNIT HISF/H IGP SYNTHASE SUBUNIT HISF/H"/>
    <property type="match status" value="1"/>
</dbReference>
<dbReference type="Pfam" id="PF00977">
    <property type="entry name" value="His_biosynth"/>
    <property type="match status" value="1"/>
</dbReference>
<dbReference type="SUPFAM" id="SSF51366">
    <property type="entry name" value="Ribulose-phoshate binding barrel"/>
    <property type="match status" value="1"/>
</dbReference>
<evidence type="ECO:0000255" key="1">
    <source>
        <dbReference type="HAMAP-Rule" id="MF_01013"/>
    </source>
</evidence>
<feature type="chain" id="PRO_0000142214" description="Imidazole glycerol phosphate synthase subunit HisF">
    <location>
        <begin position="1"/>
        <end position="256"/>
    </location>
</feature>
<feature type="active site" evidence="1">
    <location>
        <position position="11"/>
    </location>
</feature>
<feature type="active site" evidence="1">
    <location>
        <position position="130"/>
    </location>
</feature>
<gene>
    <name evidence="1" type="primary">hisF</name>
    <name type="ordered locus">Reut_A3105</name>
</gene>
<comment type="function">
    <text evidence="1">IGPS catalyzes the conversion of PRFAR and glutamine to IGP, AICAR and glutamate. The HisF subunit catalyzes the cyclization activity that produces IGP and AICAR from PRFAR using the ammonia provided by the HisH subunit.</text>
</comment>
<comment type="catalytic activity">
    <reaction evidence="1">
        <text>5-[(5-phospho-1-deoxy-D-ribulos-1-ylimino)methylamino]-1-(5-phospho-beta-D-ribosyl)imidazole-4-carboxamide + L-glutamine = D-erythro-1-(imidazol-4-yl)glycerol 3-phosphate + 5-amino-1-(5-phospho-beta-D-ribosyl)imidazole-4-carboxamide + L-glutamate + H(+)</text>
        <dbReference type="Rhea" id="RHEA:24793"/>
        <dbReference type="ChEBI" id="CHEBI:15378"/>
        <dbReference type="ChEBI" id="CHEBI:29985"/>
        <dbReference type="ChEBI" id="CHEBI:58278"/>
        <dbReference type="ChEBI" id="CHEBI:58359"/>
        <dbReference type="ChEBI" id="CHEBI:58475"/>
        <dbReference type="ChEBI" id="CHEBI:58525"/>
        <dbReference type="EC" id="4.3.2.10"/>
    </reaction>
</comment>
<comment type="pathway">
    <text evidence="1">Amino-acid biosynthesis; L-histidine biosynthesis; L-histidine from 5-phospho-alpha-D-ribose 1-diphosphate: step 5/9.</text>
</comment>
<comment type="subunit">
    <text evidence="1">Heterodimer of HisH and HisF.</text>
</comment>
<comment type="subcellular location">
    <subcellularLocation>
        <location evidence="1">Cytoplasm</location>
    </subcellularLocation>
</comment>
<comment type="similarity">
    <text evidence="1">Belongs to the HisA/HisF family.</text>
</comment>
<name>HIS6_CUPPJ</name>
<protein>
    <recommendedName>
        <fullName evidence="1">Imidazole glycerol phosphate synthase subunit HisF</fullName>
        <ecNumber evidence="1">4.3.2.10</ecNumber>
    </recommendedName>
    <alternativeName>
        <fullName evidence="1">IGP synthase cyclase subunit</fullName>
    </alternativeName>
    <alternativeName>
        <fullName evidence="1">IGP synthase subunit HisF</fullName>
    </alternativeName>
    <alternativeName>
        <fullName evidence="1">ImGP synthase subunit HisF</fullName>
        <shortName evidence="1">IGPS subunit HisF</shortName>
    </alternativeName>
</protein>
<reference key="1">
    <citation type="journal article" date="2010" name="PLoS ONE">
        <title>The complete multipartite genome sequence of Cupriavidus necator JMP134, a versatile pollutant degrader.</title>
        <authorList>
            <person name="Lykidis A."/>
            <person name="Perez-Pantoja D."/>
            <person name="Ledger T."/>
            <person name="Mavromatis K."/>
            <person name="Anderson I.J."/>
            <person name="Ivanova N.N."/>
            <person name="Hooper S.D."/>
            <person name="Lapidus A."/>
            <person name="Lucas S."/>
            <person name="Gonzalez B."/>
            <person name="Kyrpides N.C."/>
        </authorList>
    </citation>
    <scope>NUCLEOTIDE SEQUENCE [LARGE SCALE GENOMIC DNA]</scope>
    <source>
        <strain>JMP134 / LMG 1197</strain>
    </source>
</reference>
<sequence length="256" mass="26965">MLAKRIIPCLDVTNGRVVKGVNFVELRDAGDPVEIARRYDEQGADEITFLDITATSDGRDLILHIIEAVASQVFIPLTVGGGVRAVEDVRRLLNAGADKISVNSSAIANPQLVSDATGKYGSQCIVVAIDAKRSSAPGEPPRWEVFTHGGRKATGLDAVEWAKEMAARGAGEILLTSMDRDGTKSGFDLELTRAVSDAVPVPVIASGGVGGLQDLADGIRLGHADAVLAASIFHYGQHTVGEAKAFMAREGIPVRI</sequence>
<organism>
    <name type="scientific">Cupriavidus pinatubonensis (strain JMP 134 / LMG 1197)</name>
    <name type="common">Cupriavidus necator (strain JMP 134)</name>
    <dbReference type="NCBI Taxonomy" id="264198"/>
    <lineage>
        <taxon>Bacteria</taxon>
        <taxon>Pseudomonadati</taxon>
        <taxon>Pseudomonadota</taxon>
        <taxon>Betaproteobacteria</taxon>
        <taxon>Burkholderiales</taxon>
        <taxon>Burkholderiaceae</taxon>
        <taxon>Cupriavidus</taxon>
    </lineage>
</organism>
<keyword id="KW-0028">Amino-acid biosynthesis</keyword>
<keyword id="KW-0963">Cytoplasm</keyword>
<keyword id="KW-0368">Histidine biosynthesis</keyword>
<keyword id="KW-0456">Lyase</keyword>
<accession>Q46WL8</accession>